<protein>
    <recommendedName>
        <fullName>LIM/homeobox protein Lhx1</fullName>
        <shortName>LIM homeobox protein 1</shortName>
    </recommendedName>
    <alternativeName>
        <fullName>Homeobox protein Lim-1</fullName>
        <shortName>Xlim1</shortName>
        <shortName>x-Lhx1</shortName>
        <shortName>xLIM-1</shortName>
    </alternativeName>
</protein>
<evidence type="ECO:0000255" key="1">
    <source>
        <dbReference type="PROSITE-ProRule" id="PRU00108"/>
    </source>
</evidence>
<evidence type="ECO:0000255" key="2">
    <source>
        <dbReference type="PROSITE-ProRule" id="PRU00125"/>
    </source>
</evidence>
<evidence type="ECO:0000256" key="3">
    <source>
        <dbReference type="SAM" id="MobiDB-lite"/>
    </source>
</evidence>
<evidence type="ECO:0000269" key="4">
    <source>
    </source>
</evidence>
<evidence type="ECO:0000269" key="5">
    <source>
    </source>
</evidence>
<evidence type="ECO:0000269" key="6">
    <source>
    </source>
</evidence>
<evidence type="ECO:0000269" key="7">
    <source>
    </source>
</evidence>
<evidence type="ECO:0000269" key="8">
    <source>
    </source>
</evidence>
<evidence type="ECO:0000269" key="9">
    <source>
    </source>
</evidence>
<evidence type="ECO:0000269" key="10">
    <source>
    </source>
</evidence>
<evidence type="ECO:0000269" key="11">
    <source>
    </source>
</evidence>
<evidence type="ECO:0000269" key="12">
    <source>
    </source>
</evidence>
<evidence type="ECO:0000269" key="13">
    <source>
    </source>
</evidence>
<evidence type="ECO:0000269" key="14">
    <source>
    </source>
</evidence>
<evidence type="ECO:0000269" key="15">
    <source>
    </source>
</evidence>
<evidence type="ECO:0000269" key="16">
    <source>
    </source>
</evidence>
<evidence type="ECO:0000269" key="17">
    <source>
    </source>
</evidence>
<evidence type="ECO:0000269" key="18">
    <source>
    </source>
</evidence>
<evidence type="ECO:0000269" key="19">
    <source>
    </source>
</evidence>
<evidence type="ECO:0000269" key="20">
    <source>
    </source>
</evidence>
<evidence type="ECO:0000269" key="21">
    <source>
    </source>
</evidence>
<evidence type="ECO:0000269" key="22">
    <source>
    </source>
</evidence>
<evidence type="ECO:0000269" key="23">
    <source>
    </source>
</evidence>
<evidence type="ECO:0000269" key="24">
    <source>
    </source>
</evidence>
<evidence type="ECO:0000269" key="25">
    <source>
    </source>
</evidence>
<evidence type="ECO:0000269" key="26">
    <source>
    </source>
</evidence>
<reference key="1">
    <citation type="journal article" date="1992" name="Genes Dev.">
        <title>The LIM domain-containing homeo box gene Xlim-1 is expressed specifically in the organizer region of Xenopus gastrula embryos.</title>
        <authorList>
            <person name="Taira M."/>
            <person name="Jamrich M."/>
            <person name="Good P.J."/>
            <person name="Dawid I.B."/>
        </authorList>
    </citation>
    <scope>NUCLEOTIDE SEQUENCE [MRNA]</scope>
    <scope>FUNCTION</scope>
    <scope>TISSUE SPECIFICITY</scope>
    <scope>DEVELOPMENTAL STAGE</scope>
    <scope>INDUCTION</scope>
</reference>
<reference key="2">
    <citation type="journal article" date="1997" name="Proc. Natl. Acad. Sci. U.S.A.">
        <title>Transcriptional regulation of the Xlim-1 gene by activin is mediated by an element in intron I.</title>
        <authorList>
            <person name="Rebbert M.L."/>
            <person name="Dawid I.B."/>
        </authorList>
    </citation>
    <scope>NUCLEOTIDE SEQUENCE [GENOMIC DNA] OF 1-112</scope>
    <scope>INDUCTION</scope>
</reference>
<reference key="3">
    <citation type="journal article" date="1994" name="Development">
        <title>Expression of the LIM class homeobox gene Xlim-1 in pronephros and CNS cell lineages of Xenopus embryos is affected by retinoic acid and exogastrulation.</title>
        <authorList>
            <person name="Taira M."/>
            <person name="Otani H."/>
            <person name="Jamrich M."/>
            <person name="Dawid I.B."/>
        </authorList>
    </citation>
    <scope>TISSUE SPECIFICITY</scope>
    <scope>INDUCTION</scope>
</reference>
<reference key="4">
    <citation type="journal article" date="1994" name="Nature">
        <title>Role of the LIM class homeodomain protein Xlim-1 in neural and muscle induction by the Spemann organizer in Xenopus.</title>
        <authorList>
            <person name="Taira M."/>
            <person name="Otani H."/>
            <person name="Saint-Jeannet J.P."/>
            <person name="Dawid I.B."/>
        </authorList>
    </citation>
    <scope>FUNCTION</scope>
</reference>
<reference key="5">
    <citation type="journal article" date="1996" name="Int. J. Dev. Biol.">
        <title>The LIM homeodomain protein Lim-1 is widely expressed in neural, neural crest and mesoderm derivatives in vertebrate development.</title>
        <authorList>
            <person name="Karavanov A.A."/>
            <person name="Saint-Jeannet J.P."/>
            <person name="Karavanova I."/>
            <person name="Taira M."/>
            <person name="Dawid I.B."/>
        </authorList>
    </citation>
    <scope>TISSUE SPECIFICITY</scope>
    <scope>SUBCELLULAR LOCATION</scope>
</reference>
<reference key="6">
    <citation type="journal article" date="1996" name="Nature">
        <title>Interactions of the LIM-domain-binding factor Ldb1 with LIM homeodomain proteins.</title>
        <authorList>
            <person name="Agulnick A.D."/>
            <person name="Taira M."/>
            <person name="Breen J.J."/>
            <person name="Tanaka T."/>
            <person name="Dawid I.B."/>
            <person name="Westphal H."/>
        </authorList>
    </citation>
    <scope>FUNCTION</scope>
    <scope>INTERACTION WITH LDB1</scope>
    <scope>MUTAGENESIS OF CYS-28 AND CYS-88</scope>
</reference>
<reference key="7">
    <citation type="journal article" date="1997" name="Proc. Natl. Acad. Sci. U.S.A.">
        <title>Role of the Xlim-1 and Xbra genes in anteroposterior patterning of neural tissue by the head and trunk organizer.</title>
        <authorList>
            <person name="Taira M."/>
            <person name="Saint-Jeannet J.P."/>
            <person name="Dawid I.B."/>
        </authorList>
    </citation>
    <scope>FUNCTION</scope>
    <scope>INDUCTION</scope>
    <scope>MUTAGENESIS OF ILE-223</scope>
</reference>
<reference key="8">
    <citation type="journal article" date="1998" name="J. Biol. Chem.">
        <title>Interactions between LIM domains and the LIM domain-binding protein Ldb1.</title>
        <authorList>
            <person name="Breen J.J."/>
            <person name="Agulnick A.D."/>
            <person name="Westphal H."/>
            <person name="Dawid I.B."/>
        </authorList>
    </citation>
    <scope>INTERACTION WITH LDB1</scope>
    <scope>DOMAIN</scope>
    <scope>MUTAGENESIS OF CYS-28 AND CYS-88</scope>
</reference>
<reference key="9">
    <citation type="journal article" date="1999" name="Development">
        <title>derriere: a TGF-beta family member required for posterior development in Xenopus.</title>
        <authorList>
            <person name="Sun B.I."/>
            <person name="Bush S.M."/>
            <person name="Collins-Racie L.A."/>
            <person name="LaVallie E.R."/>
            <person name="DiBlasio-Smith E.A."/>
            <person name="Wolfman N.M."/>
            <person name="McCoy J.M."/>
            <person name="Sive H.L."/>
        </authorList>
    </citation>
    <scope>INDUCTION</scope>
</reference>
<reference key="10">
    <citation type="journal article" date="1999" name="Dev. Biol.">
        <title>Synergism between Pax-8 and lim-1 in embryonic kidney development.</title>
        <authorList>
            <person name="Carroll T.J."/>
            <person name="Vize P.D."/>
        </authorList>
    </citation>
    <scope>FUNCTION</scope>
    <scope>TISSUE SPECIFICITY</scope>
</reference>
<reference key="11">
    <citation type="journal article" date="1999" name="Dev. Genet.">
        <title>Dynamic patterns of gene expression in the developing pronephros of Xenopus laevis.</title>
        <authorList>
            <person name="Carroll T.J."/>
            <person name="Wallingford J.B."/>
            <person name="Vize P.D."/>
        </authorList>
    </citation>
    <scope>TISSUE SPECIFICITY</scope>
</reference>
<reference key="12">
    <citation type="journal article" date="2000" name="Biochem. Biophys. Res. Commun.">
        <title>RNA interference for the organizer-specific gene Xlim-1 in Xenopus embryos.</title>
        <authorList>
            <person name="Nakano H."/>
            <person name="Amemiya S."/>
            <person name="Shiokawa K."/>
            <person name="Taira M."/>
        </authorList>
    </citation>
    <scope>FUNCTION</scope>
</reference>
<reference key="13">
    <citation type="journal article" date="2000" name="Dev. Biol.">
        <title>Xlim-1 and LIM domain binding protein 1 cooperate with various transcription factors in the regulation of the goosecoid promoter.</title>
        <authorList>
            <person name="Mochizuki T."/>
            <person name="Karavanov A.A."/>
            <person name="Curtiss P.E."/>
            <person name="Ault K.T."/>
            <person name="Sugimoto N."/>
            <person name="Watabe T."/>
            <person name="Shiokawa K."/>
            <person name="Jamrich M."/>
            <person name="Cho K.W.Y."/>
            <person name="Dawid I.B."/>
            <person name="Taira M."/>
        </authorList>
    </citation>
    <scope>FUNCTION</scope>
</reference>
<reference key="14">
    <citation type="journal article" date="2000" name="Dev. Biol.">
        <title>A role for Xlim-1 in pronephros development in Xenopus laevis.</title>
        <authorList>
            <person name="Chan T.-C."/>
            <person name="Takahashi S."/>
            <person name="Asashima M."/>
        </authorList>
    </citation>
    <scope>FUNCTION</scope>
    <scope>TISSUE SPECIFICITY</scope>
    <scope>INDUCTION</scope>
</reference>
<reference key="15">
    <citation type="journal article" date="2001" name="Dev. Biol.">
        <title>Functional domains of the LIM homeodomain protein Xlim-1 involved in negative regulation, transactivation, and axis formation in Xenopus embryos.</title>
        <authorList>
            <person name="Hiratani I."/>
            <person name="Mochizuki T."/>
            <person name="Tochimoto N."/>
            <person name="Taira M."/>
        </authorList>
    </citation>
    <scope>DOMAIN</scope>
    <scope>MUTAGENESIS OF TYR-278; TYR-281; TYR-285; TYR-286 AND TYR-292</scope>
</reference>
<reference key="16">
    <citation type="journal article" date="2001" name="Int. J. Dev. Biol.">
        <title>A study of Xlim1 function in the Spemann-Mangold organizer.</title>
        <authorList>
            <person name="Kodjabachian L."/>
            <person name="Karavanov A.A."/>
            <person name="Hikasa H."/>
            <person name="Hukriede N.A."/>
            <person name="Aoki T."/>
            <person name="Taira M."/>
            <person name="Dawid I.B."/>
        </authorList>
    </citation>
    <scope>FUNCTION</scope>
</reference>
<reference key="17">
    <citation type="journal article" date="2001" name="J. Neurosci.">
        <title>The LIM-homeodomain gene family in the developing Xenopus brain: conservation and divergences with the mouse related to the evolution of the forebrain.</title>
        <authorList>
            <person name="Bachy I."/>
            <person name="Vernier P."/>
            <person name="Retaux S."/>
        </authorList>
    </citation>
    <scope>TISSUE SPECIFICITY</scope>
</reference>
<reference key="18">
    <citation type="journal article" date="2002" name="Proc. Natl. Acad. Sci. U.S.A.">
        <title>Ssdp proteins interact with the LIM-domain-binding protein Ldb1 to regulate development.</title>
        <authorList>
            <person name="Chen L."/>
            <person name="Segal D."/>
            <person name="Hukriede N.A."/>
            <person name="Podtelejnikov A.V."/>
            <person name="Bayarsaihan D."/>
            <person name="Kennison J.A."/>
            <person name="Ogryzko V.V."/>
            <person name="Dawid I.B."/>
            <person name="Westphal H."/>
        </authorList>
    </citation>
    <scope>FUNCTION</scope>
</reference>
<reference key="19">
    <citation type="journal article" date="2003" name="Development">
        <title>Selective degradation of excess Ldb1 by Rnf12/RLIM confers proper Ldb1 expression levels and Xlim-1/Ldb1 stoichiometry in Xenopus organizer functions.</title>
        <authorList>
            <person name="Hiratani I."/>
            <person name="Yamamoto N."/>
            <person name="Mochizuki T."/>
            <person name="Ohmori S.-Y."/>
            <person name="Taira M."/>
        </authorList>
    </citation>
    <scope>FUNCTION</scope>
    <scope>TISSUE SPECIFICITY</scope>
    <scope>INTERACTION WITH LDB1 AND RNF12</scope>
</reference>
<reference key="20">
    <citation type="journal article" date="2003" name="Dev. Biol.">
        <title>Molecular link in the sequential induction of the Spemann organizer: direct activation of the cerberus gene by Xlim-1, Xotx2, Mix.1, and Siamois, immediately downstream from Nodal and Wnt signaling.</title>
        <authorList>
            <person name="Yamamoto S."/>
            <person name="Hikasa H."/>
            <person name="Ono H."/>
            <person name="Taira M."/>
        </authorList>
    </citation>
    <scope>FUNCTION</scope>
</reference>
<reference key="21">
    <citation type="journal article" date="2003" name="Dev. Cell">
        <title>Conserved requirement of Lim1 function for cell movements during gastrulation.</title>
        <authorList>
            <person name="Hukriede N.A."/>
            <person name="Tsang T.E."/>
            <person name="Habas R."/>
            <person name="Khoo P.L."/>
            <person name="Steiner K."/>
            <person name="Weeks D.L."/>
            <person name="Tam P.P."/>
            <person name="Dawid I.B."/>
        </authorList>
    </citation>
    <scope>FUNCTION</scope>
</reference>
<reference key="22">
    <citation type="journal article" date="2004" name="J. Comp. Neurol.">
        <title>LIM-homeodomain genes as developmental and adult genetic markers of Xenopus forebrain functional subdivisions.</title>
        <authorList>
            <person name="Moreno N."/>
            <person name="Bachy I."/>
            <person name="Retaux S."/>
            <person name="Gonzalez A."/>
        </authorList>
    </citation>
    <scope>TISSUE SPECIFICITY</scope>
</reference>
<reference key="23">
    <citation type="journal article" date="2005" name="J. Comp. Neurol.">
        <title>LIM-homeodomain genes as territory markers in the brainstem of adult and developing Xenopus laevis.</title>
        <authorList>
            <person name="Moreno N."/>
            <person name="Bachy I."/>
            <person name="Retaux S."/>
            <person name="Gonzalez A."/>
        </authorList>
    </citation>
    <scope>TISSUE SPECIFICITY</scope>
</reference>
<sequence>MVHCAGCERPILDRFLLNVLDRAWHVKCVQCCECKCNLTEKCFSREGKLYCKNDFFRRFGTKCAGCAQGISPSDLVRRARSKVFHLNCFTCMMCNKQLSTGEELYIIDENKFVCKEDYLNNNNAAKENSFISVTGSDPSLSPESQDPLQDDAKDSESANVSDKEAGINENDDQNLGAKRRGPRTTIKAKQLETLKAAFAATPKPTRHIREQLAQETGLNMRVIQVWFQNRRSKERRMKQLSALGARRHAFFRSPRRMRPLVDRLEPGELIPNGPFAFYGDYQSEYYGPGSNYDFFPQGPPSSQAQTPVDLPFVPSSVPAGTPLGAMDHPIPGHHPSSDAQRFTDIMSHPPGDSPSPEPNLPGSMHSMSAEVFGQSPPFSSLSVNGGYGNHLSHPPEMNETAVW</sequence>
<comment type="function">
    <text evidence="6 7 8 9 11 13 14 15 16 17 21 23 24">Involved in the establishment of the body plan via the Spemann organizer during gastrulation. Transcriptional activator required to induce organizer gene expression downstream of siamois. Promotes head formation by binding to 5'-TAAT'-3' elements in the promoters of head organizer genes cer1 and gsc to stimulate expression. Binds as a complex with siamois and mix-A/mix.1 to the cer1 promoter, and with ldb1 and otx2 to the gsc promoter. Also involved in neural induction via the organizer, including a role in notochord formation. Acts synergistically with ldb1 and ssbp in subsequent axis formation. Involved in kidney development, acting synergistically with pax8 to establish the pronephric primordium in late gastrulae/early neurulae and with pax2 during pronephric morphogenesis in tailbud stages. Has a later role in mediating the activity of inhibitors of ventralization.</text>
</comment>
<comment type="subunit">
    <text evidence="16 23 26">Interacts with ldb1 via the tandem LIM domains. Both LIM domains are required for optimal binding and binding relieves the inhibitory effect of the LIM domains and activates lhx1. Binding to ldb1 also prevents degradation of ldb1 by rnf12. The stoichiometry of lhx1 and ldb1 is important for their function and an excess of ldb1 can inhibit lhx1 function. Interacts with the N-terminal region of rnf12 by a homeobox-dependent mechanism.</text>
</comment>
<comment type="subcellular location">
    <subcellularLocation>
        <location evidence="1 22">Nucleus</location>
    </subcellularLocation>
</comment>
<comment type="tissue specificity">
    <text evidence="5 6 9 12 16 17 18 19 20 22">Exhibits a biphasic expression pattern. Initially localized to the Spemann organizer region of gastrulae, leading to expression in prechordal mesoderm and notochord. In the second phase, expressed in the lateral mesoderm and neural plate, eventually concentrating in the pronephros and the CNS. Expressed in the pronephros primordium by late gastrula (stage 12.5) and becomes restricted to the tips of the tubules and ducts as kidney development progresses. In the CNS, becomes progressively recognizable in anatomically distinct structures during larval development. Within the forebrain, shows almost identical expression to lhx5 in the diencephalon, being expressed in alternating stripes to lhx2 and lhx9. Expressed in the diencephalic pretectum within prosomere 1, hypothalamus, ventral thalamus and zona limitans intrathalamica. In the telencephalon, the expression pattern is distinct from lhx5, being localized in the pallium and subpallium. Also expressed in the ventral territories of midbrain (mesencephalon) and hindbrain (rhombencephalon), being expressed in the mesencephalic tegmentum and hindbrain reticular formation. Also shows intense expression in the cerebellum including Purkinje cells.</text>
</comment>
<comment type="developmental stage">
    <text evidence="17">Expressed both maternally and zygotically. Expressed at a low level in the unfertilized egg. Expression is highest at the gastrula stage, then declines before rising again during the tadpole stage.</text>
</comment>
<comment type="induction">
    <text evidence="4 9 17 20 24 25">By retinoic acid and by dorsal mesoderm-inducers including activin, derriere, dvr1/vg-1 and nodal.</text>
</comment>
<comment type="domain">
    <text evidence="10 26">The LIM domains exert a negative regulatory function and disruption of the LIM domains produces an activated form. In addition, two activation domains and a negative regulatory domain exist C-terminally to the homeobox.</text>
</comment>
<name>LHX1_XENLA</name>
<organism>
    <name type="scientific">Xenopus laevis</name>
    <name type="common">African clawed frog</name>
    <dbReference type="NCBI Taxonomy" id="8355"/>
    <lineage>
        <taxon>Eukaryota</taxon>
        <taxon>Metazoa</taxon>
        <taxon>Chordata</taxon>
        <taxon>Craniata</taxon>
        <taxon>Vertebrata</taxon>
        <taxon>Euteleostomi</taxon>
        <taxon>Amphibia</taxon>
        <taxon>Batrachia</taxon>
        <taxon>Anura</taxon>
        <taxon>Pipoidea</taxon>
        <taxon>Pipidae</taxon>
        <taxon>Xenopodinae</taxon>
        <taxon>Xenopus</taxon>
        <taxon>Xenopus</taxon>
    </lineage>
</organism>
<keyword id="KW-0010">Activator</keyword>
<keyword id="KW-0217">Developmental protein</keyword>
<keyword id="KW-0221">Differentiation</keyword>
<keyword id="KW-0238">DNA-binding</keyword>
<keyword id="KW-0306">Gastrulation</keyword>
<keyword id="KW-0371">Homeobox</keyword>
<keyword id="KW-0440">LIM domain</keyword>
<keyword id="KW-0479">Metal-binding</keyword>
<keyword id="KW-0524">Neurogenesis</keyword>
<keyword id="KW-0539">Nucleus</keyword>
<keyword id="KW-1185">Reference proteome</keyword>
<keyword id="KW-0677">Repeat</keyword>
<keyword id="KW-0804">Transcription</keyword>
<keyword id="KW-0805">Transcription regulation</keyword>
<keyword id="KW-0862">Zinc</keyword>
<gene>
    <name type="primary">lhx1</name>
    <name type="synonym">lim-1</name>
    <name type="synonym">lim1</name>
</gene>
<dbReference type="EMBL" id="X63889">
    <property type="protein sequence ID" value="CAA45353.1"/>
    <property type="molecule type" value="mRNA"/>
</dbReference>
<dbReference type="EMBL" id="AF013242">
    <property type="protein sequence ID" value="AAB70190.1"/>
    <property type="molecule type" value="Genomic_DNA"/>
</dbReference>
<dbReference type="PIR" id="S23802">
    <property type="entry name" value="S23802"/>
</dbReference>
<dbReference type="RefSeq" id="NP_001084128.1">
    <property type="nucleotide sequence ID" value="NM_001090659.1"/>
</dbReference>
<dbReference type="SMR" id="P29674"/>
<dbReference type="GeneID" id="399323"/>
<dbReference type="KEGG" id="xla:399323"/>
<dbReference type="AGR" id="Xenbase:XB-GENE-856460"/>
<dbReference type="CTD" id="399323"/>
<dbReference type="Xenbase" id="XB-GENE-856460">
    <property type="gene designation" value="lhx1.L"/>
</dbReference>
<dbReference type="OMA" id="IHITENF"/>
<dbReference type="OrthoDB" id="10068367at2759"/>
<dbReference type="Proteomes" id="UP000186698">
    <property type="component" value="Chromosome 2L"/>
</dbReference>
<dbReference type="Bgee" id="399323">
    <property type="expression patterns" value="Expressed in gastrula and 8 other cell types or tissues"/>
</dbReference>
<dbReference type="GO" id="GO:0005634">
    <property type="term" value="C:nucleus"/>
    <property type="evidence" value="ECO:0000314"/>
    <property type="project" value="UniProtKB"/>
</dbReference>
<dbReference type="GO" id="GO:0005667">
    <property type="term" value="C:transcription regulator complex"/>
    <property type="evidence" value="ECO:0000314"/>
    <property type="project" value="UniProtKB"/>
</dbReference>
<dbReference type="GO" id="GO:0000981">
    <property type="term" value="F:DNA-binding transcription factor activity, RNA polymerase II-specific"/>
    <property type="evidence" value="ECO:0000318"/>
    <property type="project" value="GO_Central"/>
</dbReference>
<dbReference type="GO" id="GO:0000977">
    <property type="term" value="F:RNA polymerase II transcription regulatory region sequence-specific DNA binding"/>
    <property type="evidence" value="ECO:0000318"/>
    <property type="project" value="GO_Central"/>
</dbReference>
<dbReference type="GO" id="GO:0043565">
    <property type="term" value="F:sequence-specific DNA binding"/>
    <property type="evidence" value="ECO:0000314"/>
    <property type="project" value="UniProtKB"/>
</dbReference>
<dbReference type="GO" id="GO:0001221">
    <property type="term" value="F:transcription coregulator binding"/>
    <property type="evidence" value="ECO:0000353"/>
    <property type="project" value="UniProtKB"/>
</dbReference>
<dbReference type="GO" id="GO:0008270">
    <property type="term" value="F:zinc ion binding"/>
    <property type="evidence" value="ECO:0007669"/>
    <property type="project" value="InterPro"/>
</dbReference>
<dbReference type="GO" id="GO:0009952">
    <property type="term" value="P:anterior/posterior pattern specification"/>
    <property type="evidence" value="ECO:0000315"/>
    <property type="project" value="UniProtKB"/>
</dbReference>
<dbReference type="GO" id="GO:0009798">
    <property type="term" value="P:axis specification"/>
    <property type="evidence" value="ECO:0000315"/>
    <property type="project" value="UniProtKB"/>
</dbReference>
<dbReference type="GO" id="GO:0042074">
    <property type="term" value="P:cell migration involved in gastrulation"/>
    <property type="evidence" value="ECO:0000315"/>
    <property type="project" value="UniProtKB"/>
</dbReference>
<dbReference type="GO" id="GO:0043009">
    <property type="term" value="P:chordate embryonic development"/>
    <property type="evidence" value="ECO:0000315"/>
    <property type="project" value="UniProtKB"/>
</dbReference>
<dbReference type="GO" id="GO:0007517">
    <property type="term" value="P:muscle organ development"/>
    <property type="evidence" value="ECO:0000315"/>
    <property type="project" value="UniProtKB"/>
</dbReference>
<dbReference type="GO" id="GO:0072080">
    <property type="term" value="P:nephron tubule development"/>
    <property type="evidence" value="ECO:0000316"/>
    <property type="project" value="UniProtKB"/>
</dbReference>
<dbReference type="GO" id="GO:0022008">
    <property type="term" value="P:neurogenesis"/>
    <property type="evidence" value="ECO:0000315"/>
    <property type="project" value="UniProtKB"/>
</dbReference>
<dbReference type="GO" id="GO:0030182">
    <property type="term" value="P:neuron differentiation"/>
    <property type="evidence" value="ECO:0000318"/>
    <property type="project" value="GO_Central"/>
</dbReference>
<dbReference type="GO" id="GO:0030903">
    <property type="term" value="P:notochord development"/>
    <property type="evidence" value="ECO:0000315"/>
    <property type="project" value="UniProtKB"/>
</dbReference>
<dbReference type="GO" id="GO:0045893">
    <property type="term" value="P:positive regulation of DNA-templated transcription"/>
    <property type="evidence" value="ECO:0000314"/>
    <property type="project" value="UniProtKB"/>
</dbReference>
<dbReference type="GO" id="GO:0045944">
    <property type="term" value="P:positive regulation of transcription by RNA polymerase II"/>
    <property type="evidence" value="ECO:0000314"/>
    <property type="project" value="UniProtKB"/>
</dbReference>
<dbReference type="GO" id="GO:0039003">
    <property type="term" value="P:pronephric field specification"/>
    <property type="evidence" value="ECO:0000316"/>
    <property type="project" value="UniProtKB"/>
</dbReference>
<dbReference type="GO" id="GO:0039020">
    <property type="term" value="P:pronephric nephron tubule development"/>
    <property type="evidence" value="ECO:0000316"/>
    <property type="project" value="UniProtKB"/>
</dbReference>
<dbReference type="GO" id="GO:0048793">
    <property type="term" value="P:pronephros development"/>
    <property type="evidence" value="ECO:0000315"/>
    <property type="project" value="UniProtKB"/>
</dbReference>
<dbReference type="GO" id="GO:0003002">
    <property type="term" value="P:regionalization"/>
    <property type="evidence" value="ECO:0000315"/>
    <property type="project" value="UniProtKB"/>
</dbReference>
<dbReference type="GO" id="GO:0035565">
    <property type="term" value="P:regulation of pronephros size"/>
    <property type="evidence" value="ECO:0000316"/>
    <property type="project" value="UniProtKB"/>
</dbReference>
<dbReference type="GO" id="GO:0006357">
    <property type="term" value="P:regulation of transcription by RNA polymerase II"/>
    <property type="evidence" value="ECO:0000318"/>
    <property type="project" value="GO_Central"/>
</dbReference>
<dbReference type="GO" id="GO:0032526">
    <property type="term" value="P:response to retinoic acid"/>
    <property type="evidence" value="ECO:0000304"/>
    <property type="project" value="AgBase"/>
</dbReference>
<dbReference type="CDD" id="cd00086">
    <property type="entry name" value="homeodomain"/>
    <property type="match status" value="1"/>
</dbReference>
<dbReference type="CDD" id="cd09367">
    <property type="entry name" value="LIM1_Lhx1_Lhx5"/>
    <property type="match status" value="1"/>
</dbReference>
<dbReference type="CDD" id="cd09375">
    <property type="entry name" value="LIM2_Lhx1_Lhx5"/>
    <property type="match status" value="1"/>
</dbReference>
<dbReference type="FunFam" id="2.10.110.10:FF:000120">
    <property type="entry name" value="Insulin gene enhancer protein ISL-2"/>
    <property type="match status" value="1"/>
</dbReference>
<dbReference type="FunFam" id="1.10.10.60:FF:000075">
    <property type="entry name" value="LIM/homeobox protein Lhx1"/>
    <property type="match status" value="1"/>
</dbReference>
<dbReference type="FunFam" id="2.10.110.10:FF:000046">
    <property type="entry name" value="LIM/homeobox protein Lhx1"/>
    <property type="match status" value="1"/>
</dbReference>
<dbReference type="Gene3D" id="2.10.110.10">
    <property type="entry name" value="Cysteine Rich Protein"/>
    <property type="match status" value="2"/>
</dbReference>
<dbReference type="Gene3D" id="1.10.10.60">
    <property type="entry name" value="Homeodomain-like"/>
    <property type="match status" value="1"/>
</dbReference>
<dbReference type="InterPro" id="IPR001356">
    <property type="entry name" value="HD"/>
</dbReference>
<dbReference type="InterPro" id="IPR017970">
    <property type="entry name" value="Homeobox_CS"/>
</dbReference>
<dbReference type="InterPro" id="IPR009057">
    <property type="entry name" value="Homeodomain-like_sf"/>
</dbReference>
<dbReference type="InterPro" id="IPR049618">
    <property type="entry name" value="Lhx1/5_LIM1"/>
</dbReference>
<dbReference type="InterPro" id="IPR049619">
    <property type="entry name" value="Lhx1/5_LIM2"/>
</dbReference>
<dbReference type="InterPro" id="IPR050453">
    <property type="entry name" value="LIM_Homeobox_TF"/>
</dbReference>
<dbReference type="InterPro" id="IPR001781">
    <property type="entry name" value="Znf_LIM"/>
</dbReference>
<dbReference type="PANTHER" id="PTHR24208">
    <property type="entry name" value="LIM/HOMEOBOX PROTEIN LHX"/>
    <property type="match status" value="1"/>
</dbReference>
<dbReference type="PANTHER" id="PTHR24208:SF106">
    <property type="entry name" value="LIM_HOMEOBOX PROTEIN LHX1"/>
    <property type="match status" value="1"/>
</dbReference>
<dbReference type="Pfam" id="PF00046">
    <property type="entry name" value="Homeodomain"/>
    <property type="match status" value="1"/>
</dbReference>
<dbReference type="Pfam" id="PF00412">
    <property type="entry name" value="LIM"/>
    <property type="match status" value="2"/>
</dbReference>
<dbReference type="SMART" id="SM00389">
    <property type="entry name" value="HOX"/>
    <property type="match status" value="1"/>
</dbReference>
<dbReference type="SMART" id="SM00132">
    <property type="entry name" value="LIM"/>
    <property type="match status" value="2"/>
</dbReference>
<dbReference type="SUPFAM" id="SSF57716">
    <property type="entry name" value="Glucocorticoid receptor-like (DNA-binding domain)"/>
    <property type="match status" value="2"/>
</dbReference>
<dbReference type="SUPFAM" id="SSF46689">
    <property type="entry name" value="Homeodomain-like"/>
    <property type="match status" value="1"/>
</dbReference>
<dbReference type="PROSITE" id="PS00027">
    <property type="entry name" value="HOMEOBOX_1"/>
    <property type="match status" value="1"/>
</dbReference>
<dbReference type="PROSITE" id="PS50071">
    <property type="entry name" value="HOMEOBOX_2"/>
    <property type="match status" value="1"/>
</dbReference>
<dbReference type="PROSITE" id="PS00478">
    <property type="entry name" value="LIM_DOMAIN_1"/>
    <property type="match status" value="2"/>
</dbReference>
<dbReference type="PROSITE" id="PS50023">
    <property type="entry name" value="LIM_DOMAIN_2"/>
    <property type="match status" value="2"/>
</dbReference>
<accession>P29674</accession>
<accession>Q9PSU2</accession>
<feature type="chain" id="PRO_0000075777" description="LIM/homeobox protein Lhx1">
    <location>
        <begin position="1"/>
        <end position="403"/>
    </location>
</feature>
<feature type="domain" description="LIM zinc-binding 1" evidence="2">
    <location>
        <begin position="4"/>
        <end position="54"/>
    </location>
</feature>
<feature type="domain" description="LIM zinc-binding 2" evidence="2">
    <location>
        <begin position="63"/>
        <end position="117"/>
    </location>
</feature>
<feature type="DNA-binding region" description="Homeobox" evidence="1">
    <location>
        <begin position="179"/>
        <end position="238"/>
    </location>
</feature>
<feature type="region of interest" description="Disordered" evidence="3">
    <location>
        <begin position="131"/>
        <end position="185"/>
    </location>
</feature>
<feature type="region of interest" description="Disordered" evidence="3">
    <location>
        <begin position="318"/>
        <end position="366"/>
    </location>
</feature>
<feature type="compositionally biased region" description="Polar residues" evidence="3">
    <location>
        <begin position="131"/>
        <end position="147"/>
    </location>
</feature>
<feature type="compositionally biased region" description="Basic and acidic residues" evidence="3">
    <location>
        <begin position="150"/>
        <end position="166"/>
    </location>
</feature>
<feature type="mutagenesis site" description="Disrupts ldb1-binding. Produces an active form; when associated with G-88." evidence="23 26">
    <original>C</original>
    <variation>G</variation>
    <location>
        <position position="28"/>
    </location>
</feature>
<feature type="mutagenesis site" description="Disrupts ldb1-binding. Produces an active form; when associated with G-28." evidence="23 26">
    <original>C</original>
    <variation>G</variation>
    <location>
        <position position="88"/>
    </location>
</feature>
<feature type="mutagenesis site" description="Fails to induce chrd." evidence="24">
    <original>I</original>
    <variation>P</variation>
    <location>
        <position position="223"/>
    </location>
</feature>
<feature type="mutagenesis site" description="Abolishes transcriptional activity and axis-inducing activity; when associated with A-281; A-285; A-286 and A-292." evidence="10">
    <original>Y</original>
    <variation>A</variation>
    <location>
        <position position="278"/>
    </location>
</feature>
<feature type="mutagenesis site" description="No effect on axis-inducing activity; when associated with F-281; F-285; F-286 and F-292." evidence="10">
    <original>Y</original>
    <variation>F</variation>
    <location>
        <position position="278"/>
    </location>
</feature>
<feature type="mutagenesis site" description="Abolishes transcriptional activity and axis-inducing activity; when associated with A-278; A-285; A-286 and A-292." evidence="10">
    <original>Y</original>
    <variation>A</variation>
    <location>
        <position position="281"/>
    </location>
</feature>
<feature type="mutagenesis site" description="No effect on axis-inducing activity; when associated with F-278; F-285; F-286 and F-292." evidence="10">
    <original>Y</original>
    <variation>F</variation>
    <location>
        <position position="281"/>
    </location>
</feature>
<feature type="mutagenesis site" description="Abolishes transcriptional activity and axis-inducing activity; when associated with A-278; A-281; A-286 and A-292." evidence="10">
    <original>Y</original>
    <variation>A</variation>
    <location>
        <position position="285"/>
    </location>
</feature>
<feature type="mutagenesis site" description="No effect on axis-inducing activity; when associated with F-278; F-281; F-286 and F-292." evidence="10">
    <original>Y</original>
    <variation>F</variation>
    <location>
        <position position="285"/>
    </location>
</feature>
<feature type="mutagenesis site" description="Abolishes transcriptional activity and axis-inducing activity; when associated with A-278; A-281; A-285 and A-292." evidence="10">
    <original>Y</original>
    <variation>A</variation>
    <location>
        <position position="286"/>
    </location>
</feature>
<feature type="mutagenesis site" description="No effect on axis-inducing activity; when associated with F-278; F-281; F-285 and F-292." evidence="10">
    <original>Y</original>
    <variation>F</variation>
    <location>
        <position position="286"/>
    </location>
</feature>
<feature type="mutagenesis site" description="Abolishes transcriptional activity and axis-inducing activity; when associated with A-278; A-281; A-285 and A-286." evidence="10">
    <original>Y</original>
    <variation>A</variation>
    <location>
        <position position="292"/>
    </location>
</feature>
<feature type="mutagenesis site" description="No effect on axis-inducing activity; when associated with F-278; F-281; F-285 and F-286." evidence="10">
    <original>Y</original>
    <variation>F</variation>
    <location>
        <position position="292"/>
    </location>
</feature>
<proteinExistence type="evidence at protein level"/>